<accession>Q92D33</accession>
<name>RF3_LISIN</name>
<dbReference type="EMBL" id="AL596167">
    <property type="protein sequence ID" value="CAC96218.1"/>
    <property type="molecule type" value="Genomic_DNA"/>
</dbReference>
<dbReference type="PIR" id="AB1556">
    <property type="entry name" value="AB1556"/>
</dbReference>
<dbReference type="RefSeq" id="WP_010990708.1">
    <property type="nucleotide sequence ID" value="NC_003212.1"/>
</dbReference>
<dbReference type="SMR" id="Q92D33"/>
<dbReference type="STRING" id="272626.gene:17565317"/>
<dbReference type="KEGG" id="lin:lin0987"/>
<dbReference type="eggNOG" id="COG4108">
    <property type="taxonomic scope" value="Bacteria"/>
</dbReference>
<dbReference type="HOGENOM" id="CLU_002794_2_1_9"/>
<dbReference type="OrthoDB" id="9804431at2"/>
<dbReference type="Proteomes" id="UP000002513">
    <property type="component" value="Chromosome"/>
</dbReference>
<dbReference type="GO" id="GO:0005829">
    <property type="term" value="C:cytosol"/>
    <property type="evidence" value="ECO:0007669"/>
    <property type="project" value="TreeGrafter"/>
</dbReference>
<dbReference type="GO" id="GO:0005525">
    <property type="term" value="F:GTP binding"/>
    <property type="evidence" value="ECO:0007669"/>
    <property type="project" value="UniProtKB-UniRule"/>
</dbReference>
<dbReference type="GO" id="GO:0003924">
    <property type="term" value="F:GTPase activity"/>
    <property type="evidence" value="ECO:0007669"/>
    <property type="project" value="InterPro"/>
</dbReference>
<dbReference type="GO" id="GO:0016150">
    <property type="term" value="F:translation release factor activity, codon nonspecific"/>
    <property type="evidence" value="ECO:0007669"/>
    <property type="project" value="TreeGrafter"/>
</dbReference>
<dbReference type="GO" id="GO:0016149">
    <property type="term" value="F:translation release factor activity, codon specific"/>
    <property type="evidence" value="ECO:0007669"/>
    <property type="project" value="UniProtKB-UniRule"/>
</dbReference>
<dbReference type="GO" id="GO:0006449">
    <property type="term" value="P:regulation of translational termination"/>
    <property type="evidence" value="ECO:0007669"/>
    <property type="project" value="UniProtKB-UniRule"/>
</dbReference>
<dbReference type="CDD" id="cd04169">
    <property type="entry name" value="RF3"/>
    <property type="match status" value="1"/>
</dbReference>
<dbReference type="CDD" id="cd03689">
    <property type="entry name" value="RF3_II"/>
    <property type="match status" value="1"/>
</dbReference>
<dbReference type="CDD" id="cd16259">
    <property type="entry name" value="RF3_III"/>
    <property type="match status" value="1"/>
</dbReference>
<dbReference type="FunFam" id="2.40.30.10:FF:000040">
    <property type="entry name" value="Peptide chain release factor 3"/>
    <property type="match status" value="1"/>
</dbReference>
<dbReference type="FunFam" id="3.30.70.3280:FF:000001">
    <property type="entry name" value="Peptide chain release factor 3"/>
    <property type="match status" value="1"/>
</dbReference>
<dbReference type="FunFam" id="3.40.50.300:FF:000542">
    <property type="entry name" value="Peptide chain release factor 3"/>
    <property type="match status" value="1"/>
</dbReference>
<dbReference type="Gene3D" id="3.40.50.300">
    <property type="entry name" value="P-loop containing nucleotide triphosphate hydrolases"/>
    <property type="match status" value="1"/>
</dbReference>
<dbReference type="Gene3D" id="3.30.70.3280">
    <property type="entry name" value="Peptide chain release factor 3, domain III"/>
    <property type="match status" value="1"/>
</dbReference>
<dbReference type="Gene3D" id="2.40.30.10">
    <property type="entry name" value="Translation factors"/>
    <property type="match status" value="1"/>
</dbReference>
<dbReference type="HAMAP" id="MF_00072">
    <property type="entry name" value="Rel_fac_3"/>
    <property type="match status" value="1"/>
</dbReference>
<dbReference type="InterPro" id="IPR053905">
    <property type="entry name" value="EF-G-like_DII"/>
</dbReference>
<dbReference type="InterPro" id="IPR035647">
    <property type="entry name" value="EFG_III/V"/>
</dbReference>
<dbReference type="InterPro" id="IPR031157">
    <property type="entry name" value="G_TR_CS"/>
</dbReference>
<dbReference type="InterPro" id="IPR027417">
    <property type="entry name" value="P-loop_NTPase"/>
</dbReference>
<dbReference type="InterPro" id="IPR004548">
    <property type="entry name" value="PrfC"/>
</dbReference>
<dbReference type="InterPro" id="IPR032090">
    <property type="entry name" value="RF3_C"/>
</dbReference>
<dbReference type="InterPro" id="IPR038467">
    <property type="entry name" value="RF3_dom_3_sf"/>
</dbReference>
<dbReference type="InterPro" id="IPR041732">
    <property type="entry name" value="RF3_GTP-bd"/>
</dbReference>
<dbReference type="InterPro" id="IPR005225">
    <property type="entry name" value="Small_GTP-bd"/>
</dbReference>
<dbReference type="InterPro" id="IPR000795">
    <property type="entry name" value="T_Tr_GTP-bd_dom"/>
</dbReference>
<dbReference type="InterPro" id="IPR009000">
    <property type="entry name" value="Transl_B-barrel_sf"/>
</dbReference>
<dbReference type="NCBIfam" id="TIGR00503">
    <property type="entry name" value="prfC"/>
    <property type="match status" value="1"/>
</dbReference>
<dbReference type="NCBIfam" id="NF001964">
    <property type="entry name" value="PRK00741.1"/>
    <property type="match status" value="1"/>
</dbReference>
<dbReference type="NCBIfam" id="TIGR00231">
    <property type="entry name" value="small_GTP"/>
    <property type="match status" value="1"/>
</dbReference>
<dbReference type="PANTHER" id="PTHR43556">
    <property type="entry name" value="PEPTIDE CHAIN RELEASE FACTOR RF3"/>
    <property type="match status" value="1"/>
</dbReference>
<dbReference type="PANTHER" id="PTHR43556:SF2">
    <property type="entry name" value="PEPTIDE CHAIN RELEASE FACTOR RF3"/>
    <property type="match status" value="1"/>
</dbReference>
<dbReference type="Pfam" id="PF22042">
    <property type="entry name" value="EF-G_D2"/>
    <property type="match status" value="1"/>
</dbReference>
<dbReference type="Pfam" id="PF00009">
    <property type="entry name" value="GTP_EFTU"/>
    <property type="match status" value="1"/>
</dbReference>
<dbReference type="Pfam" id="PF16658">
    <property type="entry name" value="RF3_C"/>
    <property type="match status" value="1"/>
</dbReference>
<dbReference type="PRINTS" id="PR00315">
    <property type="entry name" value="ELONGATNFCT"/>
</dbReference>
<dbReference type="SUPFAM" id="SSF54980">
    <property type="entry name" value="EF-G C-terminal domain-like"/>
    <property type="match status" value="1"/>
</dbReference>
<dbReference type="SUPFAM" id="SSF52540">
    <property type="entry name" value="P-loop containing nucleoside triphosphate hydrolases"/>
    <property type="match status" value="1"/>
</dbReference>
<dbReference type="SUPFAM" id="SSF50447">
    <property type="entry name" value="Translation proteins"/>
    <property type="match status" value="1"/>
</dbReference>
<dbReference type="PROSITE" id="PS00301">
    <property type="entry name" value="G_TR_1"/>
    <property type="match status" value="1"/>
</dbReference>
<dbReference type="PROSITE" id="PS51722">
    <property type="entry name" value="G_TR_2"/>
    <property type="match status" value="1"/>
</dbReference>
<proteinExistence type="inferred from homology"/>
<comment type="function">
    <text evidence="1">Increases the formation of ribosomal termination complexes and stimulates activities of RF-1 and RF-2. It binds guanine nucleotides and has strong preference for UGA stop codons. It may interact directly with the ribosome. The stimulation of RF-1 and RF-2 is significantly reduced by GTP and GDP, but not by GMP.</text>
</comment>
<comment type="subcellular location">
    <subcellularLocation>
        <location evidence="1">Cytoplasm</location>
    </subcellularLocation>
</comment>
<comment type="similarity">
    <text evidence="1">Belongs to the TRAFAC class translation factor GTPase superfamily. Classic translation factor GTPase family. PrfC subfamily.</text>
</comment>
<feature type="chain" id="PRO_0000210947" description="Peptide chain release factor 3">
    <location>
        <begin position="1"/>
        <end position="522"/>
    </location>
</feature>
<feature type="domain" description="tr-type G">
    <location>
        <begin position="10"/>
        <end position="277"/>
    </location>
</feature>
<feature type="binding site" evidence="1">
    <location>
        <begin position="19"/>
        <end position="26"/>
    </location>
    <ligand>
        <name>GTP</name>
        <dbReference type="ChEBI" id="CHEBI:37565"/>
    </ligand>
</feature>
<feature type="binding site" evidence="1">
    <location>
        <begin position="87"/>
        <end position="91"/>
    </location>
    <ligand>
        <name>GTP</name>
        <dbReference type="ChEBI" id="CHEBI:37565"/>
    </ligand>
</feature>
<feature type="binding site" evidence="1">
    <location>
        <begin position="141"/>
        <end position="144"/>
    </location>
    <ligand>
        <name>GTP</name>
        <dbReference type="ChEBI" id="CHEBI:37565"/>
    </ligand>
</feature>
<reference key="1">
    <citation type="journal article" date="2001" name="Science">
        <title>Comparative genomics of Listeria species.</title>
        <authorList>
            <person name="Glaser P."/>
            <person name="Frangeul L."/>
            <person name="Buchrieser C."/>
            <person name="Rusniok C."/>
            <person name="Amend A."/>
            <person name="Baquero F."/>
            <person name="Berche P."/>
            <person name="Bloecker H."/>
            <person name="Brandt P."/>
            <person name="Chakraborty T."/>
            <person name="Charbit A."/>
            <person name="Chetouani F."/>
            <person name="Couve E."/>
            <person name="de Daruvar A."/>
            <person name="Dehoux P."/>
            <person name="Domann E."/>
            <person name="Dominguez-Bernal G."/>
            <person name="Duchaud E."/>
            <person name="Durant L."/>
            <person name="Dussurget O."/>
            <person name="Entian K.-D."/>
            <person name="Fsihi H."/>
            <person name="Garcia-del Portillo F."/>
            <person name="Garrido P."/>
            <person name="Gautier L."/>
            <person name="Goebel W."/>
            <person name="Gomez-Lopez N."/>
            <person name="Hain T."/>
            <person name="Hauf J."/>
            <person name="Jackson D."/>
            <person name="Jones L.-M."/>
            <person name="Kaerst U."/>
            <person name="Kreft J."/>
            <person name="Kuhn M."/>
            <person name="Kunst F."/>
            <person name="Kurapkat G."/>
            <person name="Madueno E."/>
            <person name="Maitournam A."/>
            <person name="Mata Vicente J."/>
            <person name="Ng E."/>
            <person name="Nedjari H."/>
            <person name="Nordsiek G."/>
            <person name="Novella S."/>
            <person name="de Pablos B."/>
            <person name="Perez-Diaz J.-C."/>
            <person name="Purcell R."/>
            <person name="Remmel B."/>
            <person name="Rose M."/>
            <person name="Schlueter T."/>
            <person name="Simoes N."/>
            <person name="Tierrez A."/>
            <person name="Vazquez-Boland J.-A."/>
            <person name="Voss H."/>
            <person name="Wehland J."/>
            <person name="Cossart P."/>
        </authorList>
    </citation>
    <scope>NUCLEOTIDE SEQUENCE [LARGE SCALE GENOMIC DNA]</scope>
    <source>
        <strain>ATCC BAA-680 / CLIP 11262</strain>
    </source>
</reference>
<keyword id="KW-0963">Cytoplasm</keyword>
<keyword id="KW-0342">GTP-binding</keyword>
<keyword id="KW-0547">Nucleotide-binding</keyword>
<keyword id="KW-0648">Protein biosynthesis</keyword>
<organism>
    <name type="scientific">Listeria innocua serovar 6a (strain ATCC BAA-680 / CLIP 11262)</name>
    <dbReference type="NCBI Taxonomy" id="272626"/>
    <lineage>
        <taxon>Bacteria</taxon>
        <taxon>Bacillati</taxon>
        <taxon>Bacillota</taxon>
        <taxon>Bacilli</taxon>
        <taxon>Bacillales</taxon>
        <taxon>Listeriaceae</taxon>
        <taxon>Listeria</taxon>
    </lineage>
</organism>
<protein>
    <recommendedName>
        <fullName evidence="1">Peptide chain release factor 3</fullName>
        <shortName evidence="1">RF-3</shortName>
    </recommendedName>
</protein>
<evidence type="ECO:0000255" key="1">
    <source>
        <dbReference type="HAMAP-Rule" id="MF_00072"/>
    </source>
</evidence>
<gene>
    <name evidence="1" type="primary">prfC</name>
    <name type="ordered locus">lin0987</name>
</gene>
<sequence>MSQDLQKEVASRKTFAIISHPDAGKTTITEQLLLFGGVIRSAGTVKGKKSGKFATSDWMEIEKQRGISVTSSVMQFDYNGSRINILDTPGHSDFSEDTYRTLMAVDSAVMVIDAAKGIEAQTLKLFKVCRMRGIPIFTFINKMDRQGKMPLELLAELEEVLGIESYPMNWPIGMGKELAGIYDRYHRVIEQYRSEEDERFLPLGEDGDLKEVHAIQKSLYYDQALEEIMLLDEAGNDFSRERIIAGEQTPVFFGSALTNFGVETFLRTFVDFAPSPSSHESNEGVIEADNPKFSGFIFKIQANMNPAHRDRIAFIRICSGEFERGMNVTLTRTGKSMKLANSTQFMADDRETVNRAVAGDIIGLYDTGNYQIGDTITNGSKKLEFEKLPQFTPELFMRVYAKNVMKQKHFHKGVEQLVQEGAIQLFKTWRTEEYIIGAVGQLQFEVFEHRMRGEYNSEIRMEPIGKKIARWVKEEDADEKLSTARSMLVKDRFDQPLFLFENEFAINWFNDKNPDIELTSLL</sequence>